<reference key="1">
    <citation type="journal article" date="1999" name="Nature">
        <title>The DNA sequence of human chromosome 22.</title>
        <authorList>
            <person name="Dunham I."/>
            <person name="Hunt A.R."/>
            <person name="Collins J.E."/>
            <person name="Bruskiewich R."/>
            <person name="Beare D.M."/>
            <person name="Clamp M."/>
            <person name="Smink L.J."/>
            <person name="Ainscough R."/>
            <person name="Almeida J.P."/>
            <person name="Babbage A.K."/>
            <person name="Bagguley C."/>
            <person name="Bailey J."/>
            <person name="Barlow K.F."/>
            <person name="Bates K.N."/>
            <person name="Beasley O.P."/>
            <person name="Bird C.P."/>
            <person name="Blakey S.E."/>
            <person name="Bridgeman A.M."/>
            <person name="Buck D."/>
            <person name="Burgess J."/>
            <person name="Burrill W.D."/>
            <person name="Burton J."/>
            <person name="Carder C."/>
            <person name="Carter N.P."/>
            <person name="Chen Y."/>
            <person name="Clark G."/>
            <person name="Clegg S.M."/>
            <person name="Cobley V.E."/>
            <person name="Cole C.G."/>
            <person name="Collier R.E."/>
            <person name="Connor R."/>
            <person name="Conroy D."/>
            <person name="Corby N.R."/>
            <person name="Coville G.J."/>
            <person name="Cox A.V."/>
            <person name="Davis J."/>
            <person name="Dawson E."/>
            <person name="Dhami P.D."/>
            <person name="Dockree C."/>
            <person name="Dodsworth S.J."/>
            <person name="Durbin R.M."/>
            <person name="Ellington A.G."/>
            <person name="Evans K.L."/>
            <person name="Fey J.M."/>
            <person name="Fleming K."/>
            <person name="French L."/>
            <person name="Garner A.A."/>
            <person name="Gilbert J.G.R."/>
            <person name="Goward M.E."/>
            <person name="Grafham D.V."/>
            <person name="Griffiths M.N.D."/>
            <person name="Hall C."/>
            <person name="Hall R.E."/>
            <person name="Hall-Tamlyn G."/>
            <person name="Heathcott R.W."/>
            <person name="Ho S."/>
            <person name="Holmes S."/>
            <person name="Hunt S.E."/>
            <person name="Jones M.C."/>
            <person name="Kershaw J."/>
            <person name="Kimberley A.M."/>
            <person name="King A."/>
            <person name="Laird G.K."/>
            <person name="Langford C.F."/>
            <person name="Leversha M.A."/>
            <person name="Lloyd C."/>
            <person name="Lloyd D.M."/>
            <person name="Martyn I.D."/>
            <person name="Mashreghi-Mohammadi M."/>
            <person name="Matthews L.H."/>
            <person name="Mccann O.T."/>
            <person name="Mcclay J."/>
            <person name="Mclaren S."/>
            <person name="McMurray A.A."/>
            <person name="Milne S.A."/>
            <person name="Mortimore B.J."/>
            <person name="Odell C.N."/>
            <person name="Pavitt R."/>
            <person name="Pearce A.V."/>
            <person name="Pearson D."/>
            <person name="Phillimore B.J.C.T."/>
            <person name="Phillips S.H."/>
            <person name="Plumb R.W."/>
            <person name="Ramsay H."/>
            <person name="Ramsey Y."/>
            <person name="Rogers L."/>
            <person name="Ross M.T."/>
            <person name="Scott C.E."/>
            <person name="Sehra H.K."/>
            <person name="Skuce C.D."/>
            <person name="Smalley S."/>
            <person name="Smith M.L."/>
            <person name="Soderlund C."/>
            <person name="Spragon L."/>
            <person name="Steward C.A."/>
            <person name="Sulston J.E."/>
            <person name="Swann R.M."/>
            <person name="Vaudin M."/>
            <person name="Wall M."/>
            <person name="Wallis J.M."/>
            <person name="Whiteley M.N."/>
            <person name="Willey D.L."/>
            <person name="Williams L."/>
            <person name="Williams S.A."/>
            <person name="Williamson H."/>
            <person name="Wilmer T.E."/>
            <person name="Wilming L."/>
            <person name="Wright C.L."/>
            <person name="Hubbard T."/>
            <person name="Bentley D.R."/>
            <person name="Beck S."/>
            <person name="Rogers J."/>
            <person name="Shimizu N."/>
            <person name="Minoshima S."/>
            <person name="Kawasaki K."/>
            <person name="Sasaki T."/>
            <person name="Asakawa S."/>
            <person name="Kudoh J."/>
            <person name="Shintani A."/>
            <person name="Shibuya K."/>
            <person name="Yoshizaki Y."/>
            <person name="Aoki N."/>
            <person name="Mitsuyama S."/>
            <person name="Roe B.A."/>
            <person name="Chen F."/>
            <person name="Chu L."/>
            <person name="Crabtree J."/>
            <person name="Deschamps S."/>
            <person name="Do A."/>
            <person name="Do T."/>
            <person name="Dorman A."/>
            <person name="Fang F."/>
            <person name="Fu Y."/>
            <person name="Hu P."/>
            <person name="Hua A."/>
            <person name="Kenton S."/>
            <person name="Lai H."/>
            <person name="Lao H.I."/>
            <person name="Lewis J."/>
            <person name="Lewis S."/>
            <person name="Lin S.-P."/>
            <person name="Loh P."/>
            <person name="Malaj E."/>
            <person name="Nguyen T."/>
            <person name="Pan H."/>
            <person name="Phan S."/>
            <person name="Qi S."/>
            <person name="Qian Y."/>
            <person name="Ray L."/>
            <person name="Ren Q."/>
            <person name="Shaull S."/>
            <person name="Sloan D."/>
            <person name="Song L."/>
            <person name="Wang Q."/>
            <person name="Wang Y."/>
            <person name="Wang Z."/>
            <person name="White J."/>
            <person name="Willingham D."/>
            <person name="Wu H."/>
            <person name="Yao Z."/>
            <person name="Zhan M."/>
            <person name="Zhang G."/>
            <person name="Chissoe S."/>
            <person name="Murray J."/>
            <person name="Miller N."/>
            <person name="Minx P."/>
            <person name="Fulton R."/>
            <person name="Johnson D."/>
            <person name="Bemis G."/>
            <person name="Bentley D."/>
            <person name="Bradshaw H."/>
            <person name="Bourne S."/>
            <person name="Cordes M."/>
            <person name="Du Z."/>
            <person name="Fulton L."/>
            <person name="Goela D."/>
            <person name="Graves T."/>
            <person name="Hawkins J."/>
            <person name="Hinds K."/>
            <person name="Kemp K."/>
            <person name="Latreille P."/>
            <person name="Layman D."/>
            <person name="Ozersky P."/>
            <person name="Rohlfing T."/>
            <person name="Scheet P."/>
            <person name="Walker C."/>
            <person name="Wamsley A."/>
            <person name="Wohldmann P."/>
            <person name="Pepin K."/>
            <person name="Nelson J."/>
            <person name="Korf I."/>
            <person name="Bedell J.A."/>
            <person name="Hillier L.W."/>
            <person name="Mardis E."/>
            <person name="Waterston R."/>
            <person name="Wilson R."/>
            <person name="Emanuel B.S."/>
            <person name="Shaikh T."/>
            <person name="Kurahashi H."/>
            <person name="Saitta S."/>
            <person name="Budarf M.L."/>
            <person name="McDermid H.E."/>
            <person name="Johnson A."/>
            <person name="Wong A.C.C."/>
            <person name="Morrow B.E."/>
            <person name="Edelmann L."/>
            <person name="Kim U.J."/>
            <person name="Shizuya H."/>
            <person name="Simon M.I."/>
            <person name="Dumanski J.P."/>
            <person name="Peyrard M."/>
            <person name="Kedra D."/>
            <person name="Seroussi E."/>
            <person name="Fransson I."/>
            <person name="Tapia I."/>
            <person name="Bruder C.E."/>
            <person name="O'Brien K.P."/>
            <person name="Wilkinson P."/>
            <person name="Bodenteich A."/>
            <person name="Hartman K."/>
            <person name="Hu X."/>
            <person name="Khan A.S."/>
            <person name="Lane L."/>
            <person name="Tilahun Y."/>
            <person name="Wright H."/>
        </authorList>
    </citation>
    <scope>NUCLEOTIDE SEQUENCE [LARGE SCALE GENOMIC DNA] (IMGT ALLELE IGLV3-27*01)</scope>
</reference>
<reference key="2">
    <citation type="journal article" date="1971" name="Hoppe-Seyler's Z. Physiol. Chem.">
        <title>Structural rule of antibodies. Primary structure of a monoclonal immunoglobulin-L-chain of the lambda type, subgroup IV (Bence-Jones-protein Kern). V. The complete amino acid sequence and its genetic interpretation.</title>
        <authorList>
            <person name="Ponstingl H."/>
            <person name="Hess M."/>
            <person name="Hilschmann N."/>
        </authorList>
    </citation>
    <scope>PROTEIN SEQUENCE OF 21-113</scope>
</reference>
<reference key="3">
    <citation type="journal article" date="2001" name="Exp. Clin. Immunogenet.">
        <title>Nomenclature of the human immunoglobulin lambda (IGL) genes.</title>
        <authorList>
            <person name="Lefranc M.P."/>
        </authorList>
    </citation>
    <scope>NOMENCLATURE</scope>
</reference>
<reference key="4">
    <citation type="book" date="2001" name="The Immunoglobulin FactsBook.">
        <title>The Immunoglobulin FactsBook.</title>
        <editorList>
            <person name="Lefranc M.P."/>
            <person name="Lefranc G."/>
        </editorList>
        <authorList>
            <person name="Lefranc M.P."/>
            <person name="Lefranc G."/>
        </authorList>
    </citation>
    <scope>NOMENCLATURE</scope>
</reference>
<reference key="5">
    <citation type="journal article" date="2007" name="Annu. Rev. Genet.">
        <title>Immunoglobulin somatic hypermutation.</title>
        <authorList>
            <person name="Teng G."/>
            <person name="Papavasiliou F.N."/>
        </authorList>
    </citation>
    <scope>REVIEW ON SOMATIC HYPERMUTATION</scope>
</reference>
<reference key="6">
    <citation type="journal article" date="2010" name="J. Allergy Clin. Immunol.">
        <title>Structure and function of immunoglobulins.</title>
        <authorList>
            <person name="Schroeder H.W. Jr."/>
            <person name="Cavacini L."/>
        </authorList>
    </citation>
    <scope>REVIEW ON IMMUNOGLOBULINS</scope>
</reference>
<reference key="7">
    <citation type="journal article" date="2012" name="Nat. Rev. Immunol.">
        <title>Molecular programming of B cell memory.</title>
        <authorList>
            <person name="McHeyzer-Williams M."/>
            <person name="Okitsu S."/>
            <person name="Wang N."/>
            <person name="McHeyzer-Williams L."/>
        </authorList>
    </citation>
    <scope>REVIEW ON FUNCTION</scope>
</reference>
<reference key="8">
    <citation type="journal article" date="2014" name="Front. Immunol.">
        <title>Immunoglobulin and T Cell Receptor Genes: IMGT((R)) and the Birth and Rise of Immunoinformatics.</title>
        <authorList>
            <person name="Lefranc M.P."/>
        </authorList>
    </citation>
    <scope>NOMENCLATURE</scope>
</reference>
<sequence>MAWIPLLLPLLILCTVSVASYELTQPSSVSVSPGQTARITCSGDVLAKKYARWFQQKPGQAPVLVIYKDSERPSGIPERFSGSSSGTTVTLTISGAQVEDEADYYCYSAADNN</sequence>
<accession>P01718</accession>
<accession>A0A075B6J3</accession>
<comment type="function">
    <text evidence="5 6 7 8">V region of the variable domain of immunoglobulin light chains that participates in the antigen recognition (PubMed:24600447). Immunoglobulins, also known as antibodies, are membrane-bound or secreted glycoproteins produced by B lymphocytes. In the recognition phase of humoral immunity, the membrane-bound immunoglobulins serve as receptors which, upon binding of a specific antigen, trigger the clonal expansion and differentiation of B lymphocytes into immunoglobulins-secreting plasma cells. Secreted immunoglobulins mediate the effector phase of humoral immunity, which results in the elimination of bound antigens (PubMed:20176268, PubMed:22158414). The antigen binding site is formed by the variable domain of one heavy chain, together with that of its associated light chain. Thus, each immunoglobulin has two antigen binding sites with remarkable affinity for a particular antigen. The variable domains are assembled by a process called V-(D)-J rearrangement and can then be subjected to somatic hypermutations which, after exposure to antigen and selection, allow affinity maturation for a particular antigen (PubMed:17576170, PubMed:20176268).</text>
</comment>
<comment type="subunit">
    <text evidence="6">Immunoglobulins are composed of two identical heavy chains and two identical light chains; disulfide-linked.</text>
</comment>
<comment type="subcellular location">
    <subcellularLocation>
        <location evidence="6 7">Secreted</location>
    </subcellularLocation>
    <subcellularLocation>
        <location evidence="6 7">Cell membrane</location>
    </subcellularLocation>
</comment>
<comment type="polymorphism">
    <text>There are several alleles. The sequence shown is that of IMGT allele IGLV3-27*01.</text>
</comment>
<comment type="caution">
    <text evidence="10">For an example of a full-length immunoglobulin lambda light chain see AC P0DOX8.</text>
</comment>
<name>LV327_HUMAN</name>
<feature type="signal peptide" evidence="3">
    <location>
        <begin position="1"/>
        <end position="20"/>
    </location>
</feature>
<feature type="chain" id="PRO_0000059847" description="Immunoglobulin lambda variable 3-27" evidence="3">
    <location>
        <begin position="21"/>
        <end position="113"/>
    </location>
</feature>
<feature type="domain" description="Ig-like" evidence="2">
    <location>
        <begin position="21"/>
        <end position="113" status="greater than"/>
    </location>
</feature>
<feature type="region of interest" description="Framework-1" evidence="1">
    <location>
        <begin position="20"/>
        <end position="41"/>
    </location>
</feature>
<feature type="region of interest" description="Complementarity-determining-1" evidence="1">
    <location>
        <begin position="42"/>
        <end position="50"/>
    </location>
</feature>
<feature type="region of interest" description="Framework-2" evidence="1">
    <location>
        <begin position="51"/>
        <end position="67"/>
    </location>
</feature>
<feature type="region of interest" description="Complementarity-determining-2" evidence="1">
    <location>
        <begin position="68"/>
        <end position="70"/>
    </location>
</feature>
<feature type="region of interest" description="Framework-3" evidence="1">
    <location>
        <begin position="71"/>
        <end position="106"/>
    </location>
</feature>
<feature type="region of interest" description="Complementarity-determining-3" evidence="1">
    <location>
        <begin position="107"/>
        <end position="113" status="greater than"/>
    </location>
</feature>
<feature type="disulfide bond" evidence="2">
    <location>
        <begin position="41"/>
        <end position="106"/>
    </location>
</feature>
<feature type="sequence conflict" description="In Ref. 2; AA sequence." evidence="10" ref="2">
    <original>E</original>
    <variation>A</variation>
    <location>
        <position position="22"/>
    </location>
</feature>
<feature type="sequence conflict" description="In Ref. 2; AA sequence." evidence="10" ref="2">
    <original>S</original>
    <variation>P</variation>
    <location>
        <position position="27"/>
    </location>
</feature>
<feature type="sequence conflict" description="In Ref. 2; AA sequence." evidence="10" ref="2">
    <original>R</original>
    <variation>V</variation>
    <location>
        <position position="38"/>
    </location>
</feature>
<feature type="sequence conflict" description="In Ref. 2; AA sequence." evidence="10" ref="2">
    <original>VLAKKYAR</original>
    <variation>NLEKTFVS</variation>
    <location>
        <begin position="45"/>
        <end position="52"/>
    </location>
</feature>
<feature type="sequence conflict" description="In Ref. 2; AA sequence." evidence="10" ref="2">
    <original>K</original>
    <variation>R</variation>
    <location>
        <position position="57"/>
    </location>
</feature>
<feature type="sequence conflict" description="In Ref. 2; AA sequence." evidence="10" ref="2">
    <original>APV</original>
    <variation>SPL</variation>
    <location>
        <begin position="61"/>
        <end position="63"/>
    </location>
</feature>
<feature type="sequence conflict" description="In Ref. 2; AA sequence." evidence="10" ref="2">
    <original>KD</original>
    <variation>HT</variation>
    <location>
        <begin position="68"/>
        <end position="69"/>
    </location>
</feature>
<feature type="sequence conflict" description="In Ref. 2; AA sequence." evidence="10" ref="2">
    <original>G</original>
    <variation>E</variation>
    <location>
        <position position="75"/>
    </location>
</feature>
<feature type="sequence conflict" description="In Ref. 2; AA sequence." evidence="10" ref="2">
    <original>TTV</original>
    <variation>ATA</variation>
    <location>
        <begin position="87"/>
        <end position="89"/>
    </location>
</feature>
<feature type="sequence conflict" description="In Ref. 2; AA sequence." evidence="10" ref="2">
    <original>VE</original>
    <variation>SV</variation>
    <location>
        <begin position="98"/>
        <end position="99"/>
    </location>
</feature>
<feature type="sequence conflict" description="In Ref. 2; AA sequence." evidence="10" ref="2">
    <original>YCYSAADNN</original>
    <variation>FCQTWDTITA</variation>
    <location>
        <begin position="105"/>
        <end position="113"/>
    </location>
</feature>
<feature type="non-terminal residue">
    <location>
        <position position="113"/>
    </location>
</feature>
<keyword id="KW-1064">Adaptive immunity</keyword>
<keyword id="KW-1003">Cell membrane</keyword>
<keyword id="KW-0903">Direct protein sequencing</keyword>
<keyword id="KW-1015">Disulfide bond</keyword>
<keyword id="KW-0391">Immunity</keyword>
<keyword id="KW-1280">Immunoglobulin</keyword>
<keyword id="KW-0393">Immunoglobulin domain</keyword>
<keyword id="KW-0472">Membrane</keyword>
<keyword id="KW-1267">Proteomics identification</keyword>
<keyword id="KW-1185">Reference proteome</keyword>
<keyword id="KW-0964">Secreted</keyword>
<keyword id="KW-0732">Signal</keyword>
<evidence type="ECO:0000250" key="1">
    <source>
        <dbReference type="UniProtKB" id="P01721"/>
    </source>
</evidence>
<evidence type="ECO:0000255" key="2">
    <source>
        <dbReference type="PROSITE-ProRule" id="PRU00114"/>
    </source>
</evidence>
<evidence type="ECO:0000269" key="3">
    <source>
    </source>
</evidence>
<evidence type="ECO:0000303" key="4">
    <source>
    </source>
</evidence>
<evidence type="ECO:0000303" key="5">
    <source>
    </source>
</evidence>
<evidence type="ECO:0000303" key="6">
    <source>
    </source>
</evidence>
<evidence type="ECO:0000303" key="7">
    <source>
    </source>
</evidence>
<evidence type="ECO:0000303" key="8">
    <source>
    </source>
</evidence>
<evidence type="ECO:0000303" key="9">
    <source ref="4"/>
</evidence>
<evidence type="ECO:0000305" key="10"/>
<evidence type="ECO:0000305" key="11">
    <source>
    </source>
</evidence>
<organism>
    <name type="scientific">Homo sapiens</name>
    <name type="common">Human</name>
    <dbReference type="NCBI Taxonomy" id="9606"/>
    <lineage>
        <taxon>Eukaryota</taxon>
        <taxon>Metazoa</taxon>
        <taxon>Chordata</taxon>
        <taxon>Craniata</taxon>
        <taxon>Vertebrata</taxon>
        <taxon>Euteleostomi</taxon>
        <taxon>Mammalia</taxon>
        <taxon>Eutheria</taxon>
        <taxon>Euarchontoglires</taxon>
        <taxon>Primates</taxon>
        <taxon>Haplorrhini</taxon>
        <taxon>Catarrhini</taxon>
        <taxon>Hominidae</taxon>
        <taxon>Homo</taxon>
    </lineage>
</organism>
<gene>
    <name evidence="4 9" type="primary">IGLV3-27</name>
</gene>
<dbReference type="EMBL" id="AC244250">
    <property type="status" value="NOT_ANNOTATED_CDS"/>
    <property type="molecule type" value="Genomic_DNA"/>
</dbReference>
<dbReference type="PIR" id="A01984">
    <property type="entry name" value="L4HUKN"/>
</dbReference>
<dbReference type="SMR" id="P01718"/>
<dbReference type="FunCoup" id="P01718">
    <property type="interactions" value="408"/>
</dbReference>
<dbReference type="IMGT_GENE-DB" id="IGLV3-27"/>
<dbReference type="BioMuta" id="IGLV3-27"/>
<dbReference type="jPOST" id="P01718"/>
<dbReference type="MassIVE" id="P01718"/>
<dbReference type="TopDownProteomics" id="P01718"/>
<dbReference type="Ensembl" id="ENST00000390304.2">
    <property type="protein sequence ID" value="ENSP00000374839.2"/>
    <property type="gene ID" value="ENSG00000211658.2"/>
</dbReference>
<dbReference type="AGR" id="HGNC:5910"/>
<dbReference type="GeneCards" id="IGLV3-27"/>
<dbReference type="HGNC" id="HGNC:5910">
    <property type="gene designation" value="IGLV3-27"/>
</dbReference>
<dbReference type="HPA" id="ENSG00000211658">
    <property type="expression patterns" value="Tissue enriched (lymphoid)"/>
</dbReference>
<dbReference type="neXtProt" id="NX_P01718"/>
<dbReference type="OpenTargets" id="ENSG00000211658"/>
<dbReference type="VEuPathDB" id="HostDB:ENSG00000211658"/>
<dbReference type="GeneTree" id="ENSGT00940000153120"/>
<dbReference type="InParanoid" id="P01718"/>
<dbReference type="OMA" id="YSAIPIH"/>
<dbReference type="OrthoDB" id="9531984at2759"/>
<dbReference type="PAN-GO" id="P01718">
    <property type="GO annotations" value="3 GO annotations based on evolutionary models"/>
</dbReference>
<dbReference type="PhylomeDB" id="P01718"/>
<dbReference type="PathwayCommons" id="P01718"/>
<dbReference type="Reactome" id="R-HSA-166663">
    <property type="pathway name" value="Initial triggering of complement"/>
</dbReference>
<dbReference type="Reactome" id="R-HSA-173623">
    <property type="pathway name" value="Classical antibody-mediated complement activation"/>
</dbReference>
<dbReference type="Reactome" id="R-HSA-198933">
    <property type="pathway name" value="Immunoregulatory interactions between a Lymphoid and a non-Lymphoid cell"/>
</dbReference>
<dbReference type="Reactome" id="R-HSA-202733">
    <property type="pathway name" value="Cell surface interactions at the vascular wall"/>
</dbReference>
<dbReference type="Reactome" id="R-HSA-2029481">
    <property type="pathway name" value="FCGR activation"/>
</dbReference>
<dbReference type="Reactome" id="R-HSA-2029482">
    <property type="pathway name" value="Regulation of actin dynamics for phagocytic cup formation"/>
</dbReference>
<dbReference type="Reactome" id="R-HSA-2029485">
    <property type="pathway name" value="Role of phospholipids in phagocytosis"/>
</dbReference>
<dbReference type="Reactome" id="R-HSA-2168880">
    <property type="pathway name" value="Scavenging of heme from plasma"/>
</dbReference>
<dbReference type="Reactome" id="R-HSA-2454202">
    <property type="pathway name" value="Fc epsilon receptor (FCERI) signaling"/>
</dbReference>
<dbReference type="Reactome" id="R-HSA-2730905">
    <property type="pathway name" value="Role of LAT2/NTAL/LAB on calcium mobilization"/>
</dbReference>
<dbReference type="Reactome" id="R-HSA-2871796">
    <property type="pathway name" value="FCERI mediated MAPK activation"/>
</dbReference>
<dbReference type="Reactome" id="R-HSA-2871809">
    <property type="pathway name" value="FCERI mediated Ca+2 mobilization"/>
</dbReference>
<dbReference type="Reactome" id="R-HSA-2871837">
    <property type="pathway name" value="FCERI mediated NF-kB activation"/>
</dbReference>
<dbReference type="Reactome" id="R-HSA-5690714">
    <property type="pathway name" value="CD22 mediated BCR regulation"/>
</dbReference>
<dbReference type="Reactome" id="R-HSA-9664323">
    <property type="pathway name" value="FCGR3A-mediated IL10 synthesis"/>
</dbReference>
<dbReference type="Reactome" id="R-HSA-9664422">
    <property type="pathway name" value="FCGR3A-mediated phagocytosis"/>
</dbReference>
<dbReference type="Reactome" id="R-HSA-9679191">
    <property type="pathway name" value="Potential therapeutics for SARS"/>
</dbReference>
<dbReference type="Reactome" id="R-HSA-977606">
    <property type="pathway name" value="Regulation of Complement cascade"/>
</dbReference>
<dbReference type="Reactome" id="R-HSA-983695">
    <property type="pathway name" value="Antigen activates B Cell Receptor (BCR) leading to generation of second messengers"/>
</dbReference>
<dbReference type="Pharos" id="P01718">
    <property type="development level" value="Tdark"/>
</dbReference>
<dbReference type="PRO" id="PR:P01718"/>
<dbReference type="Proteomes" id="UP000005640">
    <property type="component" value="Chromosome 22"/>
</dbReference>
<dbReference type="RNAct" id="P01718">
    <property type="molecule type" value="protein"/>
</dbReference>
<dbReference type="Bgee" id="ENSG00000211658">
    <property type="expression patterns" value="Expressed in lymph node and 82 other cell types or tissues"/>
</dbReference>
<dbReference type="GO" id="GO:0005576">
    <property type="term" value="C:extracellular region"/>
    <property type="evidence" value="ECO:0000304"/>
    <property type="project" value="Reactome"/>
</dbReference>
<dbReference type="GO" id="GO:0019814">
    <property type="term" value="C:immunoglobulin complex"/>
    <property type="evidence" value="ECO:0000318"/>
    <property type="project" value="GO_Central"/>
</dbReference>
<dbReference type="GO" id="GO:0005886">
    <property type="term" value="C:plasma membrane"/>
    <property type="evidence" value="ECO:0000304"/>
    <property type="project" value="Reactome"/>
</dbReference>
<dbReference type="GO" id="GO:0003823">
    <property type="term" value="F:antigen binding"/>
    <property type="evidence" value="ECO:0000303"/>
    <property type="project" value="UniProtKB"/>
</dbReference>
<dbReference type="GO" id="GO:0002250">
    <property type="term" value="P:adaptive immune response"/>
    <property type="evidence" value="ECO:0007669"/>
    <property type="project" value="UniProtKB-KW"/>
</dbReference>
<dbReference type="GO" id="GO:0006955">
    <property type="term" value="P:immune response"/>
    <property type="evidence" value="ECO:0000318"/>
    <property type="project" value="GO_Central"/>
</dbReference>
<dbReference type="FunFam" id="2.60.40.10:FF:000620">
    <property type="entry name" value="Immunoglobulin lambda locus"/>
    <property type="match status" value="1"/>
</dbReference>
<dbReference type="Gene3D" id="2.60.40.10">
    <property type="entry name" value="Immunoglobulins"/>
    <property type="match status" value="1"/>
</dbReference>
<dbReference type="InterPro" id="IPR007110">
    <property type="entry name" value="Ig-like_dom"/>
</dbReference>
<dbReference type="InterPro" id="IPR036179">
    <property type="entry name" value="Ig-like_dom_sf"/>
</dbReference>
<dbReference type="InterPro" id="IPR013783">
    <property type="entry name" value="Ig-like_fold"/>
</dbReference>
<dbReference type="InterPro" id="IPR003599">
    <property type="entry name" value="Ig_sub"/>
</dbReference>
<dbReference type="InterPro" id="IPR013106">
    <property type="entry name" value="Ig_V-set"/>
</dbReference>
<dbReference type="InterPro" id="IPR050150">
    <property type="entry name" value="IgV_Light_Chain"/>
</dbReference>
<dbReference type="PANTHER" id="PTHR23267">
    <property type="entry name" value="IMMUNOGLOBULIN LIGHT CHAIN"/>
    <property type="match status" value="1"/>
</dbReference>
<dbReference type="Pfam" id="PF07686">
    <property type="entry name" value="V-set"/>
    <property type="match status" value="1"/>
</dbReference>
<dbReference type="SMART" id="SM00409">
    <property type="entry name" value="IG"/>
    <property type="match status" value="1"/>
</dbReference>
<dbReference type="SMART" id="SM00406">
    <property type="entry name" value="IGv"/>
    <property type="match status" value="1"/>
</dbReference>
<dbReference type="SUPFAM" id="SSF48726">
    <property type="entry name" value="Immunoglobulin"/>
    <property type="match status" value="1"/>
</dbReference>
<dbReference type="PROSITE" id="PS50835">
    <property type="entry name" value="IG_LIKE"/>
    <property type="match status" value="1"/>
</dbReference>
<proteinExistence type="evidence at protein level"/>
<protein>
    <recommendedName>
        <fullName evidence="4 9">Immunoglobulin lambda variable 3-27</fullName>
    </recommendedName>
    <alternativeName>
        <fullName evidence="11">Ig lambda chain V-IV region Kern</fullName>
    </alternativeName>
</protein>